<dbReference type="EC" id="5.6.1.6" evidence="1"/>
<dbReference type="EMBL" id="AF013753">
    <property type="protein sequence ID" value="AAC14011.1"/>
    <property type="molecule type" value="mRNA"/>
</dbReference>
<dbReference type="EMBL" id="AF016950">
    <property type="protein sequence ID" value="AAC14012.1"/>
    <property type="molecule type" value="Genomic_DNA"/>
</dbReference>
<dbReference type="EMBL" id="AF016924">
    <property type="protein sequence ID" value="AAC14012.1"/>
    <property type="status" value="JOINED"/>
    <property type="molecule type" value="Genomic_DNA"/>
</dbReference>
<dbReference type="EMBL" id="AF016925">
    <property type="protein sequence ID" value="AAC14012.1"/>
    <property type="status" value="JOINED"/>
    <property type="molecule type" value="Genomic_DNA"/>
</dbReference>
<dbReference type="EMBL" id="AF016926">
    <property type="protein sequence ID" value="AAC14012.1"/>
    <property type="status" value="JOINED"/>
    <property type="molecule type" value="Genomic_DNA"/>
</dbReference>
<dbReference type="EMBL" id="AF016927">
    <property type="protein sequence ID" value="AAC14012.1"/>
    <property type="status" value="JOINED"/>
    <property type="molecule type" value="Genomic_DNA"/>
</dbReference>
<dbReference type="EMBL" id="AF016928">
    <property type="protein sequence ID" value="AAC14012.1"/>
    <property type="status" value="JOINED"/>
    <property type="molecule type" value="Genomic_DNA"/>
</dbReference>
<dbReference type="EMBL" id="AF016929">
    <property type="protein sequence ID" value="AAC14012.1"/>
    <property type="status" value="JOINED"/>
    <property type="molecule type" value="Genomic_DNA"/>
</dbReference>
<dbReference type="EMBL" id="AF016930">
    <property type="protein sequence ID" value="AAC14012.1"/>
    <property type="status" value="JOINED"/>
    <property type="molecule type" value="Genomic_DNA"/>
</dbReference>
<dbReference type="EMBL" id="AF016931">
    <property type="protein sequence ID" value="AAC14012.1"/>
    <property type="status" value="JOINED"/>
    <property type="molecule type" value="Genomic_DNA"/>
</dbReference>
<dbReference type="EMBL" id="AF016932">
    <property type="protein sequence ID" value="AAC14012.1"/>
    <property type="status" value="JOINED"/>
    <property type="molecule type" value="Genomic_DNA"/>
</dbReference>
<dbReference type="EMBL" id="AF016933">
    <property type="protein sequence ID" value="AAC14012.1"/>
    <property type="status" value="JOINED"/>
    <property type="molecule type" value="Genomic_DNA"/>
</dbReference>
<dbReference type="EMBL" id="AF016934">
    <property type="protein sequence ID" value="AAC14012.1"/>
    <property type="status" value="JOINED"/>
    <property type="molecule type" value="Genomic_DNA"/>
</dbReference>
<dbReference type="EMBL" id="AF016935">
    <property type="protein sequence ID" value="AAC14012.1"/>
    <property type="status" value="JOINED"/>
    <property type="molecule type" value="Genomic_DNA"/>
</dbReference>
<dbReference type="EMBL" id="AF016936">
    <property type="protein sequence ID" value="AAC14012.1"/>
    <property type="status" value="JOINED"/>
    <property type="molecule type" value="Genomic_DNA"/>
</dbReference>
<dbReference type="EMBL" id="AF016937">
    <property type="protein sequence ID" value="AAC14012.1"/>
    <property type="status" value="JOINED"/>
    <property type="molecule type" value="Genomic_DNA"/>
</dbReference>
<dbReference type="EMBL" id="AF016938">
    <property type="protein sequence ID" value="AAC14012.1"/>
    <property type="status" value="JOINED"/>
    <property type="molecule type" value="Genomic_DNA"/>
</dbReference>
<dbReference type="EMBL" id="AF016939">
    <property type="protein sequence ID" value="AAC14012.1"/>
    <property type="status" value="JOINED"/>
    <property type="molecule type" value="Genomic_DNA"/>
</dbReference>
<dbReference type="EMBL" id="AF016940">
    <property type="protein sequence ID" value="AAC14012.1"/>
    <property type="status" value="JOINED"/>
    <property type="molecule type" value="Genomic_DNA"/>
</dbReference>
<dbReference type="EMBL" id="AF016941">
    <property type="protein sequence ID" value="AAC14012.1"/>
    <property type="status" value="JOINED"/>
    <property type="molecule type" value="Genomic_DNA"/>
</dbReference>
<dbReference type="EMBL" id="AF016942">
    <property type="protein sequence ID" value="AAC14012.1"/>
    <property type="status" value="JOINED"/>
    <property type="molecule type" value="Genomic_DNA"/>
</dbReference>
<dbReference type="EMBL" id="AF016943">
    <property type="protein sequence ID" value="AAC14012.1"/>
    <property type="status" value="JOINED"/>
    <property type="molecule type" value="Genomic_DNA"/>
</dbReference>
<dbReference type="EMBL" id="AF016944">
    <property type="protein sequence ID" value="AAC14012.1"/>
    <property type="status" value="JOINED"/>
    <property type="molecule type" value="Genomic_DNA"/>
</dbReference>
<dbReference type="EMBL" id="AF016945">
    <property type="protein sequence ID" value="AAC14012.1"/>
    <property type="status" value="JOINED"/>
    <property type="molecule type" value="Genomic_DNA"/>
</dbReference>
<dbReference type="EMBL" id="AF016946">
    <property type="protein sequence ID" value="AAC14012.1"/>
    <property type="status" value="JOINED"/>
    <property type="molecule type" value="Genomic_DNA"/>
</dbReference>
<dbReference type="EMBL" id="AF016947">
    <property type="protein sequence ID" value="AAC14012.1"/>
    <property type="status" value="JOINED"/>
    <property type="molecule type" value="Genomic_DNA"/>
</dbReference>
<dbReference type="EMBL" id="AF016948">
    <property type="protein sequence ID" value="AAC14012.1"/>
    <property type="status" value="JOINED"/>
    <property type="molecule type" value="Genomic_DNA"/>
</dbReference>
<dbReference type="EMBL" id="AF016949">
    <property type="protein sequence ID" value="AAC14012.1"/>
    <property type="status" value="JOINED"/>
    <property type="molecule type" value="Genomic_DNA"/>
</dbReference>
<dbReference type="EMBL" id="M96680">
    <property type="protein sequence ID" value="AAA36839.1"/>
    <property type="molecule type" value="Genomic_DNA"/>
</dbReference>
<dbReference type="PIR" id="C39323">
    <property type="entry name" value="C39323"/>
</dbReference>
<dbReference type="RefSeq" id="NP_001028110.1">
    <property type="nucleotide sequence ID" value="NM_001032938.1"/>
</dbReference>
<dbReference type="BMRB" id="Q00553"/>
<dbReference type="SMR" id="Q00553"/>
<dbReference type="FunCoup" id="Q00553">
    <property type="interactions" value="528"/>
</dbReference>
<dbReference type="STRING" id="9544.ENSMMUP00000071764"/>
<dbReference type="GlyCosmos" id="Q00553">
    <property type="glycosylation" value="2 sites, No reported glycans"/>
</dbReference>
<dbReference type="PaxDb" id="9544-ENSMMUP00000014766"/>
<dbReference type="GeneID" id="574346"/>
<dbReference type="KEGG" id="mcc:574346"/>
<dbReference type="CTD" id="1080"/>
<dbReference type="eggNOG" id="KOG0054">
    <property type="taxonomic scope" value="Eukaryota"/>
</dbReference>
<dbReference type="InParanoid" id="Q00553"/>
<dbReference type="OrthoDB" id="6500128at2759"/>
<dbReference type="Proteomes" id="UP000006718">
    <property type="component" value="Unassembled WGS sequence"/>
</dbReference>
<dbReference type="GO" id="GO:0016324">
    <property type="term" value="C:apical plasma membrane"/>
    <property type="evidence" value="ECO:0000250"/>
    <property type="project" value="UniProtKB"/>
</dbReference>
<dbReference type="GO" id="GO:0034707">
    <property type="term" value="C:chloride channel complex"/>
    <property type="evidence" value="ECO:0007669"/>
    <property type="project" value="UniProtKB-KW"/>
</dbReference>
<dbReference type="GO" id="GO:0005829">
    <property type="term" value="C:cytosol"/>
    <property type="evidence" value="ECO:0000318"/>
    <property type="project" value="GO_Central"/>
</dbReference>
<dbReference type="GO" id="GO:0005769">
    <property type="term" value="C:early endosome"/>
    <property type="evidence" value="ECO:0000250"/>
    <property type="project" value="UniProtKB"/>
</dbReference>
<dbReference type="GO" id="GO:0031901">
    <property type="term" value="C:early endosome membrane"/>
    <property type="evidence" value="ECO:0007669"/>
    <property type="project" value="UniProtKB-SubCell"/>
</dbReference>
<dbReference type="GO" id="GO:0005789">
    <property type="term" value="C:endoplasmic reticulum membrane"/>
    <property type="evidence" value="ECO:0000250"/>
    <property type="project" value="UniProtKB"/>
</dbReference>
<dbReference type="GO" id="GO:0016020">
    <property type="term" value="C:membrane"/>
    <property type="evidence" value="ECO:0000250"/>
    <property type="project" value="UniProtKB"/>
</dbReference>
<dbReference type="GO" id="GO:0005634">
    <property type="term" value="C:nucleus"/>
    <property type="evidence" value="ECO:0000250"/>
    <property type="project" value="UniProtKB"/>
</dbReference>
<dbReference type="GO" id="GO:0005886">
    <property type="term" value="C:plasma membrane"/>
    <property type="evidence" value="ECO:0000250"/>
    <property type="project" value="UniProtKB"/>
</dbReference>
<dbReference type="GO" id="GO:0055038">
    <property type="term" value="C:recycling endosome membrane"/>
    <property type="evidence" value="ECO:0007669"/>
    <property type="project" value="UniProtKB-SubCell"/>
</dbReference>
<dbReference type="GO" id="GO:0140359">
    <property type="term" value="F:ABC-type transporter activity"/>
    <property type="evidence" value="ECO:0007669"/>
    <property type="project" value="InterPro"/>
</dbReference>
<dbReference type="GO" id="GO:0005524">
    <property type="term" value="F:ATP binding"/>
    <property type="evidence" value="ECO:0007669"/>
    <property type="project" value="UniProtKB-KW"/>
</dbReference>
<dbReference type="GO" id="GO:0016887">
    <property type="term" value="F:ATP hydrolysis activity"/>
    <property type="evidence" value="ECO:0000250"/>
    <property type="project" value="UniProtKB"/>
</dbReference>
<dbReference type="GO" id="GO:0042626">
    <property type="term" value="F:ATPase-coupled transmembrane transporter activity"/>
    <property type="evidence" value="ECO:0000318"/>
    <property type="project" value="GO_Central"/>
</dbReference>
<dbReference type="GO" id="GO:0015106">
    <property type="term" value="F:bicarbonate transmembrane transporter activity"/>
    <property type="evidence" value="ECO:0000250"/>
    <property type="project" value="UniProtKB"/>
</dbReference>
<dbReference type="GO" id="GO:0005254">
    <property type="term" value="F:chloride channel activity"/>
    <property type="evidence" value="ECO:0000250"/>
    <property type="project" value="UniProtKB"/>
</dbReference>
<dbReference type="GO" id="GO:0019869">
    <property type="term" value="F:chloride channel inhibitor activity"/>
    <property type="evidence" value="ECO:0000250"/>
    <property type="project" value="UniProtKB"/>
</dbReference>
<dbReference type="GO" id="GO:0015108">
    <property type="term" value="F:chloride transmembrane transporter activity"/>
    <property type="evidence" value="ECO:0000250"/>
    <property type="project" value="UniProtKB"/>
</dbReference>
<dbReference type="GO" id="GO:0005260">
    <property type="term" value="F:intracellularly ATP-gated chloride channel activity"/>
    <property type="evidence" value="ECO:0000250"/>
    <property type="project" value="UniProtKB"/>
</dbReference>
<dbReference type="GO" id="GO:0015701">
    <property type="term" value="P:bicarbonate transport"/>
    <property type="evidence" value="ECO:0000250"/>
    <property type="project" value="UniProtKB"/>
</dbReference>
<dbReference type="GO" id="GO:0071320">
    <property type="term" value="P:cellular response to cAMP"/>
    <property type="evidence" value="ECO:0000250"/>
    <property type="project" value="UniProtKB"/>
</dbReference>
<dbReference type="GO" id="GO:1904322">
    <property type="term" value="P:cellular response to forskolin"/>
    <property type="evidence" value="ECO:0000250"/>
    <property type="project" value="UniProtKB"/>
</dbReference>
<dbReference type="GO" id="GO:1902476">
    <property type="term" value="P:chloride transmembrane transport"/>
    <property type="evidence" value="ECO:0000250"/>
    <property type="project" value="UniProtKB"/>
</dbReference>
<dbReference type="GO" id="GO:0051454">
    <property type="term" value="P:intracellular pH elevation"/>
    <property type="evidence" value="ECO:0000250"/>
    <property type="project" value="UniProtKB"/>
</dbReference>
<dbReference type="GO" id="GO:0060081">
    <property type="term" value="P:membrane hyperpolarization"/>
    <property type="evidence" value="ECO:0000250"/>
    <property type="project" value="UniProtKB"/>
</dbReference>
<dbReference type="GO" id="GO:0050891">
    <property type="term" value="P:multicellular organismal-level water homeostasis"/>
    <property type="evidence" value="ECO:0000250"/>
    <property type="project" value="UniProtKB"/>
</dbReference>
<dbReference type="GO" id="GO:0034976">
    <property type="term" value="P:response to endoplasmic reticulum stress"/>
    <property type="evidence" value="ECO:0000250"/>
    <property type="project" value="UniProtKB"/>
</dbReference>
<dbReference type="GO" id="GO:0048240">
    <property type="term" value="P:sperm capacitation"/>
    <property type="evidence" value="ECO:0000250"/>
    <property type="project" value="UniProtKB"/>
</dbReference>
<dbReference type="GO" id="GO:0035377">
    <property type="term" value="P:transepithelial water transport"/>
    <property type="evidence" value="ECO:0000250"/>
    <property type="project" value="UniProtKB"/>
</dbReference>
<dbReference type="CDD" id="cd18594">
    <property type="entry name" value="ABC_6TM_CFTR_D1"/>
    <property type="match status" value="1"/>
</dbReference>
<dbReference type="CDD" id="cd18600">
    <property type="entry name" value="ABC_6TM_CFTR_D2"/>
    <property type="match status" value="1"/>
</dbReference>
<dbReference type="CDD" id="cd03291">
    <property type="entry name" value="ABCC_CFTR1"/>
    <property type="match status" value="1"/>
</dbReference>
<dbReference type="CDD" id="cd03289">
    <property type="entry name" value="ABCC_CFTR2"/>
    <property type="match status" value="1"/>
</dbReference>
<dbReference type="FunFam" id="1.20.1560.10:FF:000017">
    <property type="entry name" value="Cystic fibrosis transmembrane conductance regulator"/>
    <property type="match status" value="1"/>
</dbReference>
<dbReference type="FunFam" id="1.20.1560.10:FF:000019">
    <property type="entry name" value="Cystic fibrosis transmembrane conductance regulator"/>
    <property type="match status" value="1"/>
</dbReference>
<dbReference type="FunFam" id="3.40.50.300:FF:000581">
    <property type="entry name" value="Cystic fibrosis transmembrane conductance regulator"/>
    <property type="match status" value="1"/>
</dbReference>
<dbReference type="FunFam" id="3.40.50.300:FF:000591">
    <property type="entry name" value="Cystic fibrosis transmembrane conductance regulator"/>
    <property type="match status" value="1"/>
</dbReference>
<dbReference type="Gene3D" id="1.20.1560.10">
    <property type="entry name" value="ABC transporter type 1, transmembrane domain"/>
    <property type="match status" value="2"/>
</dbReference>
<dbReference type="Gene3D" id="3.40.50.300">
    <property type="entry name" value="P-loop containing nucleotide triphosphate hydrolases"/>
    <property type="match status" value="2"/>
</dbReference>
<dbReference type="InterPro" id="IPR003593">
    <property type="entry name" value="AAA+_ATPase"/>
</dbReference>
<dbReference type="InterPro" id="IPR011527">
    <property type="entry name" value="ABC1_TM_dom"/>
</dbReference>
<dbReference type="InterPro" id="IPR036640">
    <property type="entry name" value="ABC1_TM_sf"/>
</dbReference>
<dbReference type="InterPro" id="IPR003439">
    <property type="entry name" value="ABC_transporter-like_ATP-bd"/>
</dbReference>
<dbReference type="InterPro" id="IPR017871">
    <property type="entry name" value="ABC_transporter-like_CS"/>
</dbReference>
<dbReference type="InterPro" id="IPR050173">
    <property type="entry name" value="ABC_transporter_C-like"/>
</dbReference>
<dbReference type="InterPro" id="IPR009147">
    <property type="entry name" value="CFTR/ABCC7"/>
</dbReference>
<dbReference type="InterPro" id="IPR047082">
    <property type="entry name" value="CFTR1_ATP-bd_dom1"/>
</dbReference>
<dbReference type="InterPro" id="IPR025837">
    <property type="entry name" value="CFTR_reg_dom"/>
</dbReference>
<dbReference type="InterPro" id="IPR027417">
    <property type="entry name" value="P-loop_NTPase"/>
</dbReference>
<dbReference type="NCBIfam" id="TIGR01271">
    <property type="entry name" value="CFTR_protein"/>
    <property type="match status" value="1"/>
</dbReference>
<dbReference type="PANTHER" id="PTHR24223">
    <property type="entry name" value="ATP-BINDING CASSETTE SUB-FAMILY C"/>
    <property type="match status" value="1"/>
</dbReference>
<dbReference type="PANTHER" id="PTHR24223:SF19">
    <property type="entry name" value="CYSTIC FIBROSIS TRANSMEMBRANE CONDUCTANCE REGULATOR"/>
    <property type="match status" value="1"/>
</dbReference>
<dbReference type="Pfam" id="PF00664">
    <property type="entry name" value="ABC_membrane"/>
    <property type="match status" value="2"/>
</dbReference>
<dbReference type="Pfam" id="PF00005">
    <property type="entry name" value="ABC_tran"/>
    <property type="match status" value="2"/>
</dbReference>
<dbReference type="Pfam" id="PF14396">
    <property type="entry name" value="CFTR_R"/>
    <property type="match status" value="1"/>
</dbReference>
<dbReference type="PRINTS" id="PR01851">
    <property type="entry name" value="CYSFIBREGLTR"/>
</dbReference>
<dbReference type="SMART" id="SM00382">
    <property type="entry name" value="AAA"/>
    <property type="match status" value="2"/>
</dbReference>
<dbReference type="SUPFAM" id="SSF90123">
    <property type="entry name" value="ABC transporter transmembrane region"/>
    <property type="match status" value="2"/>
</dbReference>
<dbReference type="SUPFAM" id="SSF52540">
    <property type="entry name" value="P-loop containing nucleoside triphosphate hydrolases"/>
    <property type="match status" value="2"/>
</dbReference>
<dbReference type="PROSITE" id="PS50929">
    <property type="entry name" value="ABC_TM1F"/>
    <property type="match status" value="2"/>
</dbReference>
<dbReference type="PROSITE" id="PS00211">
    <property type="entry name" value="ABC_TRANSPORTER_1"/>
    <property type="match status" value="1"/>
</dbReference>
<dbReference type="PROSITE" id="PS50893">
    <property type="entry name" value="ABC_TRANSPORTER_2"/>
    <property type="match status" value="2"/>
</dbReference>
<reference key="1">
    <citation type="journal article" date="1998" name="Mamm. Genome">
        <title>Genomic DNA sequence of Rhesus (M. mulatta) cystic fibrosis (CFTR) gene.</title>
        <authorList>
            <person name="Wine J.J."/>
            <person name="Glavac D."/>
            <person name="Hurlock G."/>
            <person name="Robinson C."/>
            <person name="Lee M."/>
            <person name="Potocnik U."/>
            <person name="Ravnik-Glavac M."/>
            <person name="Dean M."/>
        </authorList>
    </citation>
    <scope>NUCLEOTIDE SEQUENCE [GENOMIC DNA / MRNA]</scope>
</reference>
<reference key="2">
    <citation type="journal article" date="1991" name="J. Biol. Chem.">
        <title>A cross-species analysis of the cystic fibrosis transmembrane conductance regulator. Potential functional domains and regulatory sites.</title>
        <authorList>
            <person name="Diamond G."/>
            <person name="Scanlin T.F."/>
            <person name="Zasloff M.A."/>
            <person name="Bevins C.L."/>
        </authorList>
    </citation>
    <scope>NUCLEOTIDE SEQUENCE [GENOMIC DNA] OF 601-776</scope>
</reference>
<name>CFTR_MACMU</name>
<organism>
    <name type="scientific">Macaca mulatta</name>
    <name type="common">Rhesus macaque</name>
    <dbReference type="NCBI Taxonomy" id="9544"/>
    <lineage>
        <taxon>Eukaryota</taxon>
        <taxon>Metazoa</taxon>
        <taxon>Chordata</taxon>
        <taxon>Craniata</taxon>
        <taxon>Vertebrata</taxon>
        <taxon>Euteleostomi</taxon>
        <taxon>Mammalia</taxon>
        <taxon>Eutheria</taxon>
        <taxon>Euarchontoglires</taxon>
        <taxon>Primates</taxon>
        <taxon>Haplorrhini</taxon>
        <taxon>Catarrhini</taxon>
        <taxon>Cercopithecidae</taxon>
        <taxon>Cercopithecinae</taxon>
        <taxon>Macaca</taxon>
    </lineage>
</organism>
<comment type="function">
    <text evidence="1 2">Epithelial ion channel that plays an important role in the regulation of epithelial ion and water transport and fluid homeostasis. Mediates the transport of chloride ions across the cell membrane (By similarity). Possesses an intrinsic ATPase activity and utilizes ATP to gate its channel; the passive flow of anions through the channel is gated by cycles of ATP binding and hydrolysis by the ATP-binding domains (By similarity). The ion channel is also permeable to HCO(3)(-); selectivity depends on the extracellular chloride concentration. Exerts its function also by modulating the activity of other ion channels and transporters. Contributes to the regulation of the pH and the ion content of the epithelial fluid layer. Modulates the activity of the epithelial sodium channel (ENaC) complex, in part by regulating the cell surface expression of the ENaC complex. May regulate bicarbonate secretion and salvage in epithelial cells by regulating the transporter SLC4A7. Can inhibit the chloride channel activity of ANO1 (By similarity). Plays a role in the chloride and bicarbonate homeostasis during sperm epididymal maturation and capacitation (By similarity).</text>
</comment>
<comment type="catalytic activity">
    <reaction evidence="1">
        <text>ATP + H2O + closed Cl(-) channel = ADP + phosphate + open Cl(-) channel.</text>
        <dbReference type="EC" id="5.6.1.6"/>
    </reaction>
</comment>
<comment type="catalytic activity">
    <reaction evidence="1">
        <text>chloride(in) = chloride(out)</text>
        <dbReference type="Rhea" id="RHEA:29823"/>
        <dbReference type="ChEBI" id="CHEBI:17996"/>
    </reaction>
</comment>
<comment type="catalytic activity">
    <reaction evidence="1">
        <text>hydrogencarbonate(in) = hydrogencarbonate(out)</text>
        <dbReference type="Rhea" id="RHEA:28695"/>
        <dbReference type="ChEBI" id="CHEBI:17544"/>
    </reaction>
</comment>
<comment type="catalytic activity">
    <reaction evidence="1">
        <text>ATP + H2O = ADP + phosphate + H(+)</text>
        <dbReference type="Rhea" id="RHEA:13065"/>
        <dbReference type="ChEBI" id="CHEBI:15377"/>
        <dbReference type="ChEBI" id="CHEBI:15378"/>
        <dbReference type="ChEBI" id="CHEBI:30616"/>
        <dbReference type="ChEBI" id="CHEBI:43474"/>
        <dbReference type="ChEBI" id="CHEBI:456216"/>
    </reaction>
    <physiologicalReaction direction="left-to-right" evidence="1">
        <dbReference type="Rhea" id="RHEA:13066"/>
    </physiologicalReaction>
</comment>
<comment type="subunit">
    <text evidence="1 2 3">Monomer; does not require oligomerization for channel activity. May form oligomers in the membrane (By similarity). Interacts with SLC26A3, SLC26A6 and NHERF1 (By similarity). Interacts with SHANK2 (By similarity). Interacts with MYO6 (By similarity). Interacts (via C-terminus) with GOPC (via PDZ domain); this promotes CFTR internalization and thereby decreases channel activity. Interacts with SLC4A7 through NHERF1. Found in a complex with MYO5B and RAB11A. Interacts with ANO1. Interacts with SLC26A8 (By similarity). Interacts with AHCYL1; the interaction increases CFTR activity (By similarity). Interacts with CSE1L (By similarity). The core-glycosylated form interacts with GORASP2 (via PDZ GRASP-type 1 domain) in respone to ER stress (By similarity). Interacts with MARCHF2; the interaction leads to CFTR ubiqtuitination and degradation (By similarity). Interacts with ADGRG2 (By similarity).</text>
</comment>
<comment type="subcellular location">
    <subcellularLocation>
        <location evidence="2">Apical cell membrane</location>
        <topology evidence="1">Multi-pass membrane protein</topology>
    </subcellularLocation>
    <subcellularLocation>
        <location evidence="1">Early endosome membrane</location>
        <topology evidence="1">Multi-pass membrane protein</topology>
    </subcellularLocation>
    <subcellularLocation>
        <location evidence="2">Cell membrane</location>
        <topology evidence="1">Multi-pass membrane protein</topology>
    </subcellularLocation>
    <subcellularLocation>
        <location evidence="1">Recycling endosome membrane</location>
        <topology evidence="1">Multi-pass membrane protein</topology>
    </subcellularLocation>
    <subcellularLocation>
        <location evidence="1">Endoplasmic reticulum membrane</location>
        <topology evidence="1">Multi-pass membrane protein</topology>
    </subcellularLocation>
    <subcellularLocation>
        <location evidence="3">Nucleus</location>
    </subcellularLocation>
    <text evidence="1 3">The channel is internalized from the cell surface into an endosomal recycling compartment, from where it is recycled to the cell membrane. In the oviduct and bronchus, detected on the apical side of epithelial cells, but not associated with cilia. In Sertoli cells, a processed product is detected in the nucleus. ER stress induces GORASP2-mediated unconventional (ER/Golgi-independent) trafficking of core-glycosylated CFTR to cell membrane.</text>
</comment>
<comment type="domain">
    <text evidence="1 2">Binds and hydrolyzes ATP via the two cytoplasmic ABC transporter nucleotide-binding domains. The two ATP-binding domains interact with each other, forming a head-to-tail dimer. Normal ATPase activity requires interaction between the two domains. The first ABC transporter nucleotide-binding domain has no ATPase activity by itself.</text>
</comment>
<comment type="domain">
    <text evidence="1">The PDZ-binding motif mediates interactions with GOPC and with the SLC4A7, NHERF1/EBP50 complex.</text>
</comment>
<comment type="domain">
    <text evidence="1">The disordered R region mediates channel activation when it is phosphorylated, but not in the absence of phosphorylation.</text>
</comment>
<comment type="PTM">
    <text evidence="1">N-glycosylated.</text>
</comment>
<comment type="PTM">
    <text evidence="1">Phosphorylated; cAMP treatment promotes phosphorylation and activates the channel. Dephosphorylation decreases the ATPase activity (in vitro). Phosphorylation at PKA sites activates the channel. Phosphorylation at PKC sites enhances the response to phosphorylation by PKA. Phosphorylated by AMPK; this inhibits channel activity.</text>
</comment>
<comment type="PTM">
    <text evidence="1">Ubiquitinated, leading to its degradation in the lysosome. Deubiquitination by USP10 in early endosomes enhances its endocytic recycling to the cell membrane. Ubiquitinated by RNF185 during ER stress. Ubiquitinated by MARCHF2 (By similarity).</text>
</comment>
<comment type="similarity">
    <text evidence="7">Belongs to the ABC transporter superfamily. ABCC family. CFTR transporter (TC 3.A.1.202) subfamily.</text>
</comment>
<gene>
    <name evidence="1" type="primary">CFTR</name>
    <name type="synonym">ABCC7</name>
</gene>
<proteinExistence type="evidence at transcript level"/>
<feature type="chain" id="PRO_0000093422" description="Cystic fibrosis transmembrane conductance regulator">
    <location>
        <begin position="1"/>
        <end position="1481"/>
    </location>
</feature>
<feature type="topological domain" description="Cytoplasmic" evidence="1">
    <location>
        <begin position="1"/>
        <end position="77"/>
    </location>
</feature>
<feature type="transmembrane region" description="Helical; Name=1" evidence="1">
    <location>
        <begin position="78"/>
        <end position="98"/>
    </location>
</feature>
<feature type="topological domain" description="Extracellular" evidence="1">
    <location>
        <begin position="99"/>
        <end position="122"/>
    </location>
</feature>
<feature type="transmembrane region" description="Helical; Name=2" evidence="1">
    <location>
        <begin position="123"/>
        <end position="146"/>
    </location>
</feature>
<feature type="topological domain" description="Cytoplasmic" evidence="1">
    <location>
        <begin position="147"/>
        <end position="195"/>
    </location>
</feature>
<feature type="transmembrane region" description="Helical; Name=3" evidence="1">
    <location>
        <begin position="196"/>
        <end position="216"/>
    </location>
</feature>
<feature type="topological domain" description="Extracellular" evidence="1">
    <location>
        <begin position="217"/>
        <end position="222"/>
    </location>
</feature>
<feature type="transmembrane region" description="Helical; Name=4" evidence="1">
    <location>
        <begin position="223"/>
        <end position="243"/>
    </location>
</feature>
<feature type="topological domain" description="Cytoplasmic" evidence="1">
    <location>
        <begin position="244"/>
        <end position="298"/>
    </location>
</feature>
<feature type="transmembrane region" description="Helical; Name=5" evidence="1">
    <location>
        <begin position="299"/>
        <end position="319"/>
    </location>
</feature>
<feature type="topological domain" description="Extracellular" evidence="1">
    <location>
        <begin position="320"/>
        <end position="339"/>
    </location>
</feature>
<feature type="transmembrane region" description="Helical; Name=6" evidence="1">
    <location>
        <begin position="340"/>
        <end position="358"/>
    </location>
</feature>
<feature type="topological domain" description="Cytoplasmic" evidence="1">
    <location>
        <begin position="359"/>
        <end position="858"/>
    </location>
</feature>
<feature type="transmembrane region" description="Helical; Name=7" evidence="1">
    <location>
        <begin position="859"/>
        <end position="879"/>
    </location>
</feature>
<feature type="topological domain" description="Extracellular" evidence="1">
    <location>
        <begin position="880"/>
        <end position="918"/>
    </location>
</feature>
<feature type="transmembrane region" description="Discontinuously helical; Name=8" evidence="1">
    <location>
        <begin position="919"/>
        <end position="939"/>
    </location>
</feature>
<feature type="topological domain" description="Cytoplasmic" evidence="1">
    <location>
        <begin position="940"/>
        <end position="990"/>
    </location>
</feature>
<feature type="transmembrane region" description="Helical; Name=9" evidence="1">
    <location>
        <begin position="991"/>
        <end position="1011"/>
    </location>
</feature>
<feature type="topological domain" description="Extracellular" evidence="1">
    <location>
        <begin position="1012"/>
        <end position="1013"/>
    </location>
</feature>
<feature type="transmembrane region" description="Helical; Name=10" evidence="1">
    <location>
        <begin position="1014"/>
        <end position="1034"/>
    </location>
</feature>
<feature type="topological domain" description="Cytoplasmic" evidence="1">
    <location>
        <begin position="1035"/>
        <end position="1095"/>
    </location>
</feature>
<feature type="transmembrane region" description="Helical; Name=11" evidence="1">
    <location>
        <begin position="1096"/>
        <end position="1116"/>
    </location>
</feature>
<feature type="topological domain" description="Extracellular" evidence="1">
    <location>
        <begin position="1117"/>
        <end position="1130"/>
    </location>
</feature>
<feature type="transmembrane region" description="Helical; Name=12" evidence="1">
    <location>
        <begin position="1131"/>
        <end position="1151"/>
    </location>
</feature>
<feature type="topological domain" description="Cytoplasmic" evidence="1">
    <location>
        <begin position="1152"/>
        <end position="1481"/>
    </location>
</feature>
<feature type="domain" description="ABC transmembrane type-1 1" evidence="6">
    <location>
        <begin position="81"/>
        <end position="365"/>
    </location>
</feature>
<feature type="domain" description="ABC transporter 1" evidence="5">
    <location>
        <begin position="423"/>
        <end position="646"/>
    </location>
</feature>
<feature type="domain" description="ABC transmembrane type-1 2" evidence="6">
    <location>
        <begin position="859"/>
        <end position="1155"/>
    </location>
</feature>
<feature type="domain" description="ABC transporter 2" evidence="5">
    <location>
        <begin position="1211"/>
        <end position="1444"/>
    </location>
</feature>
<feature type="region of interest" description="Disordered R region" evidence="1">
    <location>
        <begin position="654"/>
        <end position="831"/>
    </location>
</feature>
<feature type="region of interest" description="Interaction with GORASP2" evidence="1">
    <location>
        <begin position="1387"/>
        <end position="1481"/>
    </location>
</feature>
<feature type="short sequence motif" description="PDZ-binding" evidence="1">
    <location>
        <begin position="1479"/>
        <end position="1481"/>
    </location>
</feature>
<feature type="binding site" evidence="1">
    <location>
        <position position="401"/>
    </location>
    <ligand>
        <name>ATP</name>
        <dbReference type="ChEBI" id="CHEBI:30616"/>
        <label>1</label>
    </ligand>
</feature>
<feature type="binding site" evidence="1">
    <location>
        <position position="434"/>
    </location>
    <ligand>
        <name>ATP</name>
        <dbReference type="ChEBI" id="CHEBI:30616"/>
        <label>1</label>
    </ligand>
</feature>
<feature type="binding site" evidence="5">
    <location>
        <begin position="458"/>
        <end position="465"/>
    </location>
    <ligand>
        <name>ATP</name>
        <dbReference type="ChEBI" id="CHEBI:30616"/>
        <label>1</label>
    </ligand>
</feature>
<feature type="binding site" evidence="2">
    <location>
        <position position="493"/>
    </location>
    <ligand>
        <name>ATP</name>
        <dbReference type="ChEBI" id="CHEBI:30616"/>
        <label>1</label>
    </ligand>
</feature>
<feature type="binding site" evidence="1">
    <location>
        <position position="1220"/>
    </location>
    <ligand>
        <name>ATP</name>
        <dbReference type="ChEBI" id="CHEBI:30616"/>
        <label>2</label>
    </ligand>
</feature>
<feature type="binding site" evidence="5">
    <location>
        <begin position="1245"/>
        <end position="1252"/>
    </location>
    <ligand>
        <name>ATP</name>
        <dbReference type="ChEBI" id="CHEBI:30616"/>
        <label>2</label>
    </ligand>
</feature>
<feature type="modified residue" description="Phosphoserine" evidence="1">
    <location>
        <position position="549"/>
    </location>
</feature>
<feature type="modified residue" description="Phosphoserine" evidence="1">
    <location>
        <position position="660"/>
    </location>
</feature>
<feature type="modified residue" description="Phosphoserine; by PKA" evidence="1">
    <location>
        <position position="670"/>
    </location>
</feature>
<feature type="modified residue" description="Phosphoserine" evidence="1">
    <location>
        <position position="686"/>
    </location>
</feature>
<feature type="modified residue" description="Phosphoserine" evidence="1">
    <location>
        <position position="700"/>
    </location>
</feature>
<feature type="modified residue" description="Phosphoserine" evidence="1">
    <location>
        <position position="712"/>
    </location>
</feature>
<feature type="modified residue" description="Phosphothreonine" evidence="1">
    <location>
        <position position="717"/>
    </location>
</feature>
<feature type="modified residue" description="Phosphoserine" evidence="1">
    <location>
        <position position="737"/>
    </location>
</feature>
<feature type="modified residue" description="Phosphoserine" evidence="1">
    <location>
        <position position="753"/>
    </location>
</feature>
<feature type="modified residue" description="Phosphoserine" evidence="1">
    <location>
        <position position="768"/>
    </location>
</feature>
<feature type="modified residue" description="Phosphoserine" evidence="1">
    <location>
        <position position="790"/>
    </location>
</feature>
<feature type="modified residue" description="Phosphoserine" evidence="1">
    <location>
        <position position="795"/>
    </location>
</feature>
<feature type="modified residue" description="Phosphoserine" evidence="1">
    <location>
        <position position="813"/>
    </location>
</feature>
<feature type="modified residue" description="Phosphoserine" evidence="1">
    <location>
        <position position="1445"/>
    </location>
</feature>
<feature type="modified residue" description="Phosphoserine" evidence="1">
    <location>
        <position position="1457"/>
    </location>
</feature>
<feature type="lipid moiety-binding region" description="S-palmitoyl cysteine" evidence="1">
    <location>
        <position position="524"/>
    </location>
</feature>
<feature type="lipid moiety-binding region" description="S-palmitoyl cysteine" evidence="1">
    <location>
        <position position="1396"/>
    </location>
</feature>
<feature type="glycosylation site" description="N-linked (GlcNAc...) asparagine" evidence="4">
    <location>
        <position position="894"/>
    </location>
</feature>
<feature type="glycosylation site" description="N-linked (GlcNAc...) asparagine" evidence="4">
    <location>
        <position position="900"/>
    </location>
</feature>
<feature type="cross-link" description="Glycyl lysine isopeptide (Lys-Gly) (interchain with G-Cter in ubiquitin)" evidence="1">
    <location>
        <position position="688"/>
    </location>
</feature>
<feature type="sequence conflict" description="In Ref. 2; AAA36839." evidence="7" ref="2">
    <original>ILV</original>
    <variation>TTL</variation>
    <location>
        <begin position="601"/>
        <end position="603"/>
    </location>
</feature>
<feature type="sequence conflict" description="In Ref. 2; AAA36839." evidence="7" ref="2">
    <original>P</original>
    <variation>G</variation>
    <location>
        <position position="676"/>
    </location>
</feature>
<feature type="sequence conflict" description="In Ref. 2; AAA36839." evidence="7" ref="2">
    <original>D</original>
    <variation>Y</variation>
    <location>
        <position position="741"/>
    </location>
</feature>
<feature type="sequence conflict" description="In Ref. 2; AAA36839." evidence="7" ref="2">
    <original>V</original>
    <variation>E</variation>
    <location>
        <position position="769"/>
    </location>
</feature>
<feature type="sequence conflict" description="In Ref. 1; AAC14011." evidence="7" ref="1">
    <original>F</original>
    <variation>L</variation>
    <location>
        <position position="833"/>
    </location>
</feature>
<accession>Q00553</accession>
<accession>O62668</accession>
<accession>O62673</accession>
<keyword id="KW-0067">ATP-binding</keyword>
<keyword id="KW-1003">Cell membrane</keyword>
<keyword id="KW-0868">Chloride</keyword>
<keyword id="KW-0869">Chloride channel</keyword>
<keyword id="KW-0256">Endoplasmic reticulum</keyword>
<keyword id="KW-0967">Endosome</keyword>
<keyword id="KW-0325">Glycoprotein</keyword>
<keyword id="KW-0407">Ion channel</keyword>
<keyword id="KW-0406">Ion transport</keyword>
<keyword id="KW-0413">Isomerase</keyword>
<keyword id="KW-1017">Isopeptide bond</keyword>
<keyword id="KW-0449">Lipoprotein</keyword>
<keyword id="KW-0472">Membrane</keyword>
<keyword id="KW-0547">Nucleotide-binding</keyword>
<keyword id="KW-0539">Nucleus</keyword>
<keyword id="KW-0564">Palmitate</keyword>
<keyword id="KW-0597">Phosphoprotein</keyword>
<keyword id="KW-1185">Reference proteome</keyword>
<keyword id="KW-0677">Repeat</keyword>
<keyword id="KW-0812">Transmembrane</keyword>
<keyword id="KW-1133">Transmembrane helix</keyword>
<keyword id="KW-0813">Transport</keyword>
<keyword id="KW-0832">Ubl conjugation</keyword>
<protein>
    <recommendedName>
        <fullName evidence="1">Cystic fibrosis transmembrane conductance regulator</fullName>
        <shortName>CFTR</shortName>
    </recommendedName>
    <alternativeName>
        <fullName>ATP-binding cassette sub-family C member 7</fullName>
    </alternativeName>
    <alternativeName>
        <fullName>Channel conductance-controlling ATPase</fullName>
        <ecNumber evidence="1">5.6.1.6</ecNumber>
    </alternativeName>
    <alternativeName>
        <fullName>cAMP-dependent chloride channel</fullName>
    </alternativeName>
</protein>
<evidence type="ECO:0000250" key="1">
    <source>
        <dbReference type="UniProtKB" id="P13569"/>
    </source>
</evidence>
<evidence type="ECO:0000250" key="2">
    <source>
        <dbReference type="UniProtKB" id="P26361"/>
    </source>
</evidence>
<evidence type="ECO:0000250" key="3">
    <source>
        <dbReference type="UniProtKB" id="P34158"/>
    </source>
</evidence>
<evidence type="ECO:0000255" key="4"/>
<evidence type="ECO:0000255" key="5">
    <source>
        <dbReference type="PROSITE-ProRule" id="PRU00434"/>
    </source>
</evidence>
<evidence type="ECO:0000255" key="6">
    <source>
        <dbReference type="PROSITE-ProRule" id="PRU00441"/>
    </source>
</evidence>
<evidence type="ECO:0000305" key="7"/>
<sequence length="1481" mass="168489">MQRSPLEKASVVSKLFFSWTRPILRKGYRQRLELSDIYQIPSADSADNLSEKLEREWDRELASKKNPKLINALRRCFFWRFMFYGILLYLGEVTKAVQPLLLGRIIASYDPDNKEERSIAIYLGIGLCLLFIVRTLLLHPAIFGLHHIGMQMRIAMFSLIYKKTLKLSSRVLDKISIGQLVSLLSNNLNKFDEGLALAHFVWIVPLQVALLMGLIWELLQASAFCGLGFLIVLALFQAGLGRMMMKYRDQRAGKINERLVITSEMIENIQSVKAYCWEEAMEKMIENLRQTELKLTRKAAYVRYFNSSAFFFSGFFVVFLSVLPYALIKGIVLRKIFTTISFCIVLRMAVTRQFPWAVQTWYDSLGAINKIQDFLQKQEYKTLEYNLTTTEVVMENVTAFWEEGFGELFEKAKQNNSNRKTSNDDDSLFFSNFSLLGTPVLKDINFKIERGQLLAVAGSTGAGKTSLLMMIMGELEPSEGKIKHSGRISFCSQFSWIMPGTIKENIIFGVSYDEYRYRSVINACQLEEDISKFAEKDNIVLGEGGITLSGGQRARISLARAVYKDADLYLLDSPFGYLDVLTEKEIFESCVCKLMANKTRILVTSKMEHLKKADKILILHEGSSYFYGTFSELQNLRPDFSSKLMGYDSFDQFSAERRNSILTETLRRFSLEGDAPVSWTETKKQSFKQTGEFGEKRKNSILNPINSIRKFSIVQKTPLQMNGIEEDSDEPLERRLSLVPDSEQGEVILPRISVISTGPTLQARRRQSVLNLMTHSVNQGQSIHRKTAASTRKVSLAPQANLTELDIYSRRLSQETGLEISEEINEEDLKECFFDDMESIPAVTTWNTYLRYITVHKSLIFVLIWCLVIFLAEVAASLVVLWFLGNTPPQDKGNSTYSRNNSYAVIITRTSSYYVFYIYVGVADTLLAMGFFRGLPLVHTLITVSKILHHKMLHSVLQAPMSTLNTLKAGGILNRFSKDIAILDDLLPLTIFDFIQLLLIVIGAIAVVAVLQPYIFVATVPVIVAFIMLRAYFLQTSQQLKQLESEGRSPIFTHLVTSLKGLWTLRAFGRQPYFETLFHKALNLHTANWFLYLSTLRWFQMRIEMIFVIFFIAVTFISILTTGEGEGTVGIILTLAMNIMSTLQWAVNSSIDVDSLMRSVSRVFKFIDMPTEEGKPTRSTKPYKNGQLSKVMVIENSHVKKDDIWPSGGQMTVKDLTAKYTEGGNPILENISFSISPGQRVGLLGRTGSGKSTLLSAFLRLLNTEGEIQIDGVSWDSITLQQWRKAFGVIPQKVFIFSGTFRKNLDPYEQWSDQEIWKVADEVGLRSVIEQFPGKLDFVLVDGGCVLSHGHKQLMCLARSVLSKAKILLLDEPSAHLDPVTYQIIRRTLKQAFADCTVILCEHRIEAMLECQQFLVIEENKVRQYDSIQKLLNERSLFRQAISPSDRVKLFPHRNSSKCKTQPQIAALKEETEEEVQDTRL</sequence>